<comment type="subcellular location">
    <subcellularLocation>
        <location>Plastid</location>
        <location>Chloroplast</location>
    </subcellularLocation>
</comment>
<comment type="similarity">
    <text evidence="1">Belongs to the bacterial ribosomal protein bL33 family.</text>
</comment>
<feature type="chain" id="PRO_0000276525" description="Large ribosomal subunit protein bL33c">
    <location>
        <begin position="1"/>
        <end position="64"/>
    </location>
</feature>
<reference key="1">
    <citation type="journal article" date="2007" name="Mol. Genet. Genomics">
        <title>Chloroplast genomes of the diatoms Phaeodactylum tricornutum and Thalassiosira pseudonana: comparison with other plastid genomes of the red lineage.</title>
        <authorList>
            <person name="Oudot-Le Secq M.-P."/>
            <person name="Grimwood J."/>
            <person name="Shapiro H."/>
            <person name="Armbrust E.V."/>
            <person name="Bowler C."/>
            <person name="Green B.R."/>
        </authorList>
    </citation>
    <scope>NUCLEOTIDE SEQUENCE [LARGE SCALE GENOMIC DNA]</scope>
    <source>
        <strain>CCAP 1055/1</strain>
    </source>
</reference>
<gene>
    <name evidence="1" type="primary">rpl33</name>
</gene>
<protein>
    <recommendedName>
        <fullName evidence="1">Large ribosomal subunit protein bL33c</fullName>
    </recommendedName>
    <alternativeName>
        <fullName evidence="2">50S ribosomal protein L33, chloroplastic</fullName>
    </alternativeName>
</protein>
<keyword id="KW-0150">Chloroplast</keyword>
<keyword id="KW-0934">Plastid</keyword>
<keyword id="KW-1185">Reference proteome</keyword>
<keyword id="KW-0687">Ribonucleoprotein</keyword>
<keyword id="KW-0689">Ribosomal protein</keyword>
<accession>A0T0D5</accession>
<sequence length="64" mass="7536">MAKNKGTRILITLECTECRSNLEKRSPGVSRYSTQKNRRNNPERLELKKYCSHCNKTTLHKEIK</sequence>
<organism>
    <name type="scientific">Phaeodactylum tricornutum (strain CCAP 1055/1)</name>
    <dbReference type="NCBI Taxonomy" id="556484"/>
    <lineage>
        <taxon>Eukaryota</taxon>
        <taxon>Sar</taxon>
        <taxon>Stramenopiles</taxon>
        <taxon>Ochrophyta</taxon>
        <taxon>Bacillariophyta</taxon>
        <taxon>Bacillariophyceae</taxon>
        <taxon>Bacillariophycidae</taxon>
        <taxon>Naviculales</taxon>
        <taxon>Phaeodactylaceae</taxon>
        <taxon>Phaeodactylum</taxon>
    </lineage>
</organism>
<geneLocation type="chloroplast"/>
<dbReference type="EMBL" id="EF067920">
    <property type="protein sequence ID" value="ABK20633.1"/>
    <property type="molecule type" value="Genomic_DNA"/>
</dbReference>
<dbReference type="RefSeq" id="YP_874410.1">
    <property type="nucleotide sequence ID" value="NC_008588.1"/>
</dbReference>
<dbReference type="SMR" id="A0T0D5"/>
<dbReference type="STRING" id="556484.A0T0D5"/>
<dbReference type="GeneID" id="4524585"/>
<dbReference type="InParanoid" id="A0T0D5"/>
<dbReference type="Proteomes" id="UP000000759">
    <property type="component" value="Chloroplast"/>
</dbReference>
<dbReference type="GO" id="GO:0009507">
    <property type="term" value="C:chloroplast"/>
    <property type="evidence" value="ECO:0007669"/>
    <property type="project" value="UniProtKB-SubCell"/>
</dbReference>
<dbReference type="GO" id="GO:1990904">
    <property type="term" value="C:ribonucleoprotein complex"/>
    <property type="evidence" value="ECO:0007669"/>
    <property type="project" value="UniProtKB-KW"/>
</dbReference>
<dbReference type="GO" id="GO:0005840">
    <property type="term" value="C:ribosome"/>
    <property type="evidence" value="ECO:0007669"/>
    <property type="project" value="UniProtKB-KW"/>
</dbReference>
<dbReference type="GO" id="GO:0003735">
    <property type="term" value="F:structural constituent of ribosome"/>
    <property type="evidence" value="ECO:0007669"/>
    <property type="project" value="InterPro"/>
</dbReference>
<dbReference type="GO" id="GO:0006412">
    <property type="term" value="P:translation"/>
    <property type="evidence" value="ECO:0007669"/>
    <property type="project" value="UniProtKB-UniRule"/>
</dbReference>
<dbReference type="Gene3D" id="2.20.28.120">
    <property type="entry name" value="Ribosomal protein L33"/>
    <property type="match status" value="1"/>
</dbReference>
<dbReference type="HAMAP" id="MF_00294">
    <property type="entry name" value="Ribosomal_bL33"/>
    <property type="match status" value="1"/>
</dbReference>
<dbReference type="InterPro" id="IPR001705">
    <property type="entry name" value="Ribosomal_bL33"/>
</dbReference>
<dbReference type="InterPro" id="IPR018264">
    <property type="entry name" value="Ribosomal_bL33_CS"/>
</dbReference>
<dbReference type="InterPro" id="IPR038584">
    <property type="entry name" value="Ribosomal_bL33_sf"/>
</dbReference>
<dbReference type="InterPro" id="IPR011332">
    <property type="entry name" value="Ribosomal_zn-bd"/>
</dbReference>
<dbReference type="NCBIfam" id="NF001764">
    <property type="entry name" value="PRK00504.1"/>
    <property type="match status" value="1"/>
</dbReference>
<dbReference type="NCBIfam" id="NF001860">
    <property type="entry name" value="PRK00595.1"/>
    <property type="match status" value="1"/>
</dbReference>
<dbReference type="NCBIfam" id="TIGR01023">
    <property type="entry name" value="rpmG_bact"/>
    <property type="match status" value="1"/>
</dbReference>
<dbReference type="PANTHER" id="PTHR43168">
    <property type="entry name" value="50S RIBOSOMAL PROTEIN L33, CHLOROPLASTIC"/>
    <property type="match status" value="1"/>
</dbReference>
<dbReference type="PANTHER" id="PTHR43168:SF2">
    <property type="entry name" value="LARGE RIBOSOMAL SUBUNIT PROTEIN BL33C"/>
    <property type="match status" value="1"/>
</dbReference>
<dbReference type="Pfam" id="PF00471">
    <property type="entry name" value="Ribosomal_L33"/>
    <property type="match status" value="1"/>
</dbReference>
<dbReference type="SUPFAM" id="SSF57829">
    <property type="entry name" value="Zn-binding ribosomal proteins"/>
    <property type="match status" value="1"/>
</dbReference>
<dbReference type="PROSITE" id="PS00582">
    <property type="entry name" value="RIBOSOMAL_L33"/>
    <property type="match status" value="1"/>
</dbReference>
<evidence type="ECO:0000255" key="1">
    <source>
        <dbReference type="HAMAP-Rule" id="MF_00294"/>
    </source>
</evidence>
<evidence type="ECO:0000305" key="2"/>
<proteinExistence type="inferred from homology"/>
<name>RK33_PHATC</name>